<dbReference type="EMBL" id="AF062006">
    <property type="protein sequence ID" value="AAC28019.1"/>
    <property type="molecule type" value="mRNA"/>
</dbReference>
<dbReference type="EMBL" id="AF061444">
    <property type="protein sequence ID" value="AAC77911.1"/>
    <property type="molecule type" value="mRNA"/>
</dbReference>
<dbReference type="EMBL" id="FN820440">
    <property type="protein sequence ID" value="CBL95002.2"/>
    <property type="molecule type" value="mRNA"/>
</dbReference>
<dbReference type="EMBL" id="AC078860">
    <property type="status" value="NOT_ANNOTATED_CDS"/>
    <property type="molecule type" value="Genomic_DNA"/>
</dbReference>
<dbReference type="EMBL" id="AC090116">
    <property type="status" value="NOT_ANNOTATED_CDS"/>
    <property type="molecule type" value="Genomic_DNA"/>
</dbReference>
<dbReference type="EMBL" id="BC096324">
    <property type="protein sequence ID" value="AAH96324.1"/>
    <property type="molecule type" value="mRNA"/>
</dbReference>
<dbReference type="EMBL" id="BC096325">
    <property type="protein sequence ID" value="AAH96325.1"/>
    <property type="molecule type" value="mRNA"/>
</dbReference>
<dbReference type="EMBL" id="BC096326">
    <property type="protein sequence ID" value="AAH96326.1"/>
    <property type="molecule type" value="mRNA"/>
</dbReference>
<dbReference type="EMBL" id="BC099650">
    <property type="protein sequence ID" value="AAH99650.1"/>
    <property type="molecule type" value="mRNA"/>
</dbReference>
<dbReference type="CCDS" id="CCDS61194.1">
    <molecule id="O75473-2"/>
</dbReference>
<dbReference type="CCDS" id="CCDS61195.1">
    <molecule id="O75473-3"/>
</dbReference>
<dbReference type="CCDS" id="CCDS9000.1">
    <molecule id="O75473-1"/>
</dbReference>
<dbReference type="PIR" id="JE0176">
    <property type="entry name" value="JE0176"/>
</dbReference>
<dbReference type="RefSeq" id="NP_001264155.1">
    <molecule id="O75473-2"/>
    <property type="nucleotide sequence ID" value="NM_001277226.2"/>
</dbReference>
<dbReference type="RefSeq" id="NP_001264156.1">
    <molecule id="O75473-3"/>
    <property type="nucleotide sequence ID" value="NM_001277227.2"/>
</dbReference>
<dbReference type="RefSeq" id="NP_003658.1">
    <molecule id="O75473-1"/>
    <property type="nucleotide sequence ID" value="NM_003667.4"/>
</dbReference>
<dbReference type="PDB" id="4BSR">
    <property type="method" value="X-ray"/>
    <property type="resolution" value="3.20 A"/>
    <property type="chains" value="A/B=22-543"/>
</dbReference>
<dbReference type="PDB" id="4BSS">
    <property type="method" value="X-ray"/>
    <property type="resolution" value="3.20 A"/>
    <property type="chains" value="A/B/E/F=22-543"/>
</dbReference>
<dbReference type="PDB" id="4BST">
    <property type="method" value="X-ray"/>
    <property type="resolution" value="4.30 A"/>
    <property type="chains" value="A/B=22-543"/>
</dbReference>
<dbReference type="PDB" id="4BSU">
    <property type="method" value="X-ray"/>
    <property type="resolution" value="3.20 A"/>
    <property type="chains" value="A/B/E/F=22-543"/>
</dbReference>
<dbReference type="PDB" id="4KNG">
    <property type="method" value="X-ray"/>
    <property type="resolution" value="2.50 A"/>
    <property type="chains" value="A/B=32-557"/>
</dbReference>
<dbReference type="PDB" id="4UFR">
    <property type="method" value="X-ray"/>
    <property type="resolution" value="2.20 A"/>
    <property type="chains" value="A/C=32-486, A/C=538-544"/>
</dbReference>
<dbReference type="PDB" id="4UFS">
    <property type="method" value="X-ray"/>
    <property type="resolution" value="4.80 A"/>
    <property type="chains" value="A=32-486, A=538-544"/>
</dbReference>
<dbReference type="PDBsum" id="4BSR"/>
<dbReference type="PDBsum" id="4BSS"/>
<dbReference type="PDBsum" id="4BST"/>
<dbReference type="PDBsum" id="4BSU"/>
<dbReference type="PDBsum" id="4KNG"/>
<dbReference type="PDBsum" id="4UFR"/>
<dbReference type="PDBsum" id="4UFS"/>
<dbReference type="SMR" id="O75473"/>
<dbReference type="BioGRID" id="114119">
    <property type="interactions" value="15"/>
</dbReference>
<dbReference type="CORUM" id="O75473"/>
<dbReference type="FunCoup" id="O75473">
    <property type="interactions" value="1080"/>
</dbReference>
<dbReference type="IntAct" id="O75473">
    <property type="interactions" value="7"/>
</dbReference>
<dbReference type="STRING" id="9606.ENSP00000266674"/>
<dbReference type="GuidetoPHARMACOLOGY" id="148"/>
<dbReference type="GlyCosmos" id="O75473">
    <property type="glycosylation" value="5 sites, No reported glycans"/>
</dbReference>
<dbReference type="GlyGen" id="O75473">
    <property type="glycosylation" value="6 sites"/>
</dbReference>
<dbReference type="iPTMnet" id="O75473"/>
<dbReference type="PhosphoSitePlus" id="O75473"/>
<dbReference type="SwissPalm" id="O75473"/>
<dbReference type="BioMuta" id="LGR5"/>
<dbReference type="jPOST" id="O75473"/>
<dbReference type="MassIVE" id="O75473"/>
<dbReference type="PaxDb" id="9606-ENSP00000266674"/>
<dbReference type="PeptideAtlas" id="O75473"/>
<dbReference type="ProteomicsDB" id="15173"/>
<dbReference type="ProteomicsDB" id="50034">
    <molecule id="O75473-1"/>
</dbReference>
<dbReference type="ProteomicsDB" id="50035">
    <molecule id="O75473-2"/>
</dbReference>
<dbReference type="ABCD" id="O75473">
    <property type="antibodies" value="15 sequenced antibodies"/>
</dbReference>
<dbReference type="Antibodypedia" id="1987">
    <property type="antibodies" value="952 antibodies from 43 providers"/>
</dbReference>
<dbReference type="DNASU" id="8549"/>
<dbReference type="Ensembl" id="ENST00000266674.10">
    <molecule id="O75473-1"/>
    <property type="protein sequence ID" value="ENSP00000266674.4"/>
    <property type="gene ID" value="ENSG00000139292.13"/>
</dbReference>
<dbReference type="Ensembl" id="ENST00000536515.5">
    <molecule id="O75473-3"/>
    <property type="protein sequence ID" value="ENSP00000443033.1"/>
    <property type="gene ID" value="ENSG00000139292.13"/>
</dbReference>
<dbReference type="Ensembl" id="ENST00000540815.2">
    <molecule id="O75473-2"/>
    <property type="protein sequence ID" value="ENSP00000441035.2"/>
    <property type="gene ID" value="ENSG00000139292.13"/>
</dbReference>
<dbReference type="GeneID" id="8549"/>
<dbReference type="KEGG" id="hsa:8549"/>
<dbReference type="MANE-Select" id="ENST00000266674.10">
    <property type="protein sequence ID" value="ENSP00000266674.4"/>
    <property type="RefSeq nucleotide sequence ID" value="NM_003667.4"/>
    <property type="RefSeq protein sequence ID" value="NP_003658.1"/>
</dbReference>
<dbReference type="UCSC" id="uc001swl.5">
    <molecule id="O75473-1"/>
    <property type="organism name" value="human"/>
</dbReference>
<dbReference type="AGR" id="HGNC:4504"/>
<dbReference type="CTD" id="8549"/>
<dbReference type="DisGeNET" id="8549"/>
<dbReference type="GeneCards" id="LGR5"/>
<dbReference type="HGNC" id="HGNC:4504">
    <property type="gene designation" value="LGR5"/>
</dbReference>
<dbReference type="HPA" id="ENSG00000139292">
    <property type="expression patterns" value="Tissue enhanced (fallopian tube, placenta, skeletal muscle)"/>
</dbReference>
<dbReference type="MIM" id="606667">
    <property type="type" value="gene"/>
</dbReference>
<dbReference type="neXtProt" id="NX_O75473"/>
<dbReference type="OpenTargets" id="ENSG00000139292"/>
<dbReference type="PharmGKB" id="PA28894"/>
<dbReference type="VEuPathDB" id="HostDB:ENSG00000139292"/>
<dbReference type="eggNOG" id="KOG0619">
    <property type="taxonomic scope" value="Eukaryota"/>
</dbReference>
<dbReference type="eggNOG" id="KOG2087">
    <property type="taxonomic scope" value="Eukaryota"/>
</dbReference>
<dbReference type="GeneTree" id="ENSGT00940000160214"/>
<dbReference type="HOGENOM" id="CLU_006843_0_0_1"/>
<dbReference type="InParanoid" id="O75473"/>
<dbReference type="OMA" id="PSSMGFM"/>
<dbReference type="OrthoDB" id="1883493at2759"/>
<dbReference type="PAN-GO" id="O75473">
    <property type="GO annotations" value="3 GO annotations based on evolutionary models"/>
</dbReference>
<dbReference type="PhylomeDB" id="O75473"/>
<dbReference type="TreeFam" id="TF316814"/>
<dbReference type="PathwayCommons" id="O75473"/>
<dbReference type="Reactome" id="R-HSA-4641263">
    <property type="pathway name" value="Regulation of FZD by ubiquitination"/>
</dbReference>
<dbReference type="SignaLink" id="O75473"/>
<dbReference type="SIGNOR" id="O75473"/>
<dbReference type="BioGRID-ORCS" id="8549">
    <property type="hits" value="16 hits in 1154 CRISPR screens"/>
</dbReference>
<dbReference type="ChiTaRS" id="LGR5">
    <property type="organism name" value="human"/>
</dbReference>
<dbReference type="EvolutionaryTrace" id="O75473"/>
<dbReference type="GeneWiki" id="LGR5"/>
<dbReference type="GenomeRNAi" id="8549"/>
<dbReference type="Pharos" id="O75473">
    <property type="development level" value="Tbio"/>
</dbReference>
<dbReference type="PRO" id="PR:O75473"/>
<dbReference type="Proteomes" id="UP000005640">
    <property type="component" value="Chromosome 12"/>
</dbReference>
<dbReference type="RNAct" id="O75473">
    <property type="molecule type" value="protein"/>
</dbReference>
<dbReference type="Bgee" id="ENSG00000139292">
    <property type="expression patterns" value="Expressed in hair follicle and 153 other cell types or tissues"/>
</dbReference>
<dbReference type="ExpressionAtlas" id="O75473">
    <property type="expression patterns" value="baseline and differential"/>
</dbReference>
<dbReference type="GO" id="GO:0005886">
    <property type="term" value="C:plasma membrane"/>
    <property type="evidence" value="ECO:0000314"/>
    <property type="project" value="UniProtKB"/>
</dbReference>
<dbReference type="GO" id="GO:0032588">
    <property type="term" value="C:trans-Golgi network membrane"/>
    <property type="evidence" value="ECO:0000314"/>
    <property type="project" value="UniProtKB"/>
</dbReference>
<dbReference type="GO" id="GO:0004930">
    <property type="term" value="F:G protein-coupled receptor activity"/>
    <property type="evidence" value="ECO:0000304"/>
    <property type="project" value="ProtInc"/>
</dbReference>
<dbReference type="GO" id="GO:0016500">
    <property type="term" value="F:protein-hormone receptor activity"/>
    <property type="evidence" value="ECO:0007669"/>
    <property type="project" value="InterPro"/>
</dbReference>
<dbReference type="GO" id="GO:0004888">
    <property type="term" value="F:transmembrane signaling receptor activity"/>
    <property type="evidence" value="ECO:0000314"/>
    <property type="project" value="UniProtKB"/>
</dbReference>
<dbReference type="GO" id="GO:2001013">
    <property type="term" value="P:epithelial cell proliferation involved in renal tubule morphogenesis"/>
    <property type="evidence" value="ECO:0007669"/>
    <property type="project" value="Ensembl"/>
</dbReference>
<dbReference type="GO" id="GO:0007186">
    <property type="term" value="P:G protein-coupled receptor signaling pathway"/>
    <property type="evidence" value="ECO:0000304"/>
    <property type="project" value="ProtInc"/>
</dbReference>
<dbReference type="GO" id="GO:0001942">
    <property type="term" value="P:hair follicle development"/>
    <property type="evidence" value="ECO:0007669"/>
    <property type="project" value="Ensembl"/>
</dbReference>
<dbReference type="GO" id="GO:0048839">
    <property type="term" value="P:inner ear development"/>
    <property type="evidence" value="ECO:0007669"/>
    <property type="project" value="Ensembl"/>
</dbReference>
<dbReference type="GO" id="GO:0009994">
    <property type="term" value="P:oocyte differentiation"/>
    <property type="evidence" value="ECO:0007669"/>
    <property type="project" value="Ensembl"/>
</dbReference>
<dbReference type="GO" id="GO:0090263">
    <property type="term" value="P:positive regulation of canonical Wnt signaling pathway"/>
    <property type="evidence" value="ECO:0000314"/>
    <property type="project" value="UniProtKB"/>
</dbReference>
<dbReference type="GO" id="GO:0042127">
    <property type="term" value="P:regulation of cell population proliferation"/>
    <property type="evidence" value="ECO:0007669"/>
    <property type="project" value="Ensembl"/>
</dbReference>
<dbReference type="CDD" id="cd15363">
    <property type="entry name" value="7tmA_LGR5"/>
    <property type="match status" value="1"/>
</dbReference>
<dbReference type="FunFam" id="1.20.1070.10:FF:000028">
    <property type="entry name" value="leucine-rich repeat-containing G-protein coupled receptor 4 isoform X1"/>
    <property type="match status" value="1"/>
</dbReference>
<dbReference type="FunFam" id="3.80.10.10:FF:000028">
    <property type="entry name" value="leucine-rich repeat-containing G-protein coupled receptor 4 isoform X1"/>
    <property type="match status" value="1"/>
</dbReference>
<dbReference type="Gene3D" id="1.20.1070.10">
    <property type="entry name" value="Rhodopsin 7-helix transmembrane proteins"/>
    <property type="match status" value="1"/>
</dbReference>
<dbReference type="Gene3D" id="3.80.10.10">
    <property type="entry name" value="Ribonuclease Inhibitor"/>
    <property type="match status" value="1"/>
</dbReference>
<dbReference type="InterPro" id="IPR000276">
    <property type="entry name" value="GPCR_Rhodpsn"/>
</dbReference>
<dbReference type="InterPro" id="IPR017452">
    <property type="entry name" value="GPCR_Rhodpsn_7TM"/>
</dbReference>
<dbReference type="InterPro" id="IPR002131">
    <property type="entry name" value="Gphrmn_rcpt_fam"/>
</dbReference>
<dbReference type="InterPro" id="IPR001611">
    <property type="entry name" value="Leu-rich_rpt"/>
</dbReference>
<dbReference type="InterPro" id="IPR003591">
    <property type="entry name" value="Leu-rich_rpt_typical-subtyp"/>
</dbReference>
<dbReference type="InterPro" id="IPR032675">
    <property type="entry name" value="LRR_dom_sf"/>
</dbReference>
<dbReference type="InterPro" id="IPR000372">
    <property type="entry name" value="LRRNT"/>
</dbReference>
<dbReference type="PANTHER" id="PTHR24372">
    <property type="entry name" value="GLYCOPROTEIN HORMONE RECEPTOR"/>
    <property type="match status" value="1"/>
</dbReference>
<dbReference type="Pfam" id="PF00001">
    <property type="entry name" value="7tm_1"/>
    <property type="match status" value="1"/>
</dbReference>
<dbReference type="Pfam" id="PF00560">
    <property type="entry name" value="LRR_1"/>
    <property type="match status" value="1"/>
</dbReference>
<dbReference type="Pfam" id="PF13855">
    <property type="entry name" value="LRR_8"/>
    <property type="match status" value="4"/>
</dbReference>
<dbReference type="Pfam" id="PF01462">
    <property type="entry name" value="LRRNT"/>
    <property type="match status" value="1"/>
</dbReference>
<dbReference type="PRINTS" id="PR00373">
    <property type="entry name" value="GLYCHORMONER"/>
</dbReference>
<dbReference type="PRINTS" id="PR00237">
    <property type="entry name" value="GPCRRHODOPSN"/>
</dbReference>
<dbReference type="SMART" id="SM00364">
    <property type="entry name" value="LRR_BAC"/>
    <property type="match status" value="5"/>
</dbReference>
<dbReference type="SMART" id="SM00365">
    <property type="entry name" value="LRR_SD22"/>
    <property type="match status" value="4"/>
</dbReference>
<dbReference type="SMART" id="SM00369">
    <property type="entry name" value="LRR_TYP"/>
    <property type="match status" value="15"/>
</dbReference>
<dbReference type="SMART" id="SM00013">
    <property type="entry name" value="LRRNT"/>
    <property type="match status" value="1"/>
</dbReference>
<dbReference type="SUPFAM" id="SSF81321">
    <property type="entry name" value="Family A G protein-coupled receptor-like"/>
    <property type="match status" value="1"/>
</dbReference>
<dbReference type="SUPFAM" id="SSF52058">
    <property type="entry name" value="L domain-like"/>
    <property type="match status" value="1"/>
</dbReference>
<dbReference type="SUPFAM" id="SSF52047">
    <property type="entry name" value="RNI-like"/>
    <property type="match status" value="1"/>
</dbReference>
<dbReference type="PROSITE" id="PS50262">
    <property type="entry name" value="G_PROTEIN_RECEP_F1_2"/>
    <property type="match status" value="1"/>
</dbReference>
<dbReference type="PROSITE" id="PS51450">
    <property type="entry name" value="LRR"/>
    <property type="match status" value="15"/>
</dbReference>
<organism>
    <name type="scientific">Homo sapiens</name>
    <name type="common">Human</name>
    <dbReference type="NCBI Taxonomy" id="9606"/>
    <lineage>
        <taxon>Eukaryota</taxon>
        <taxon>Metazoa</taxon>
        <taxon>Chordata</taxon>
        <taxon>Craniata</taxon>
        <taxon>Vertebrata</taxon>
        <taxon>Euteleostomi</taxon>
        <taxon>Mammalia</taxon>
        <taxon>Eutheria</taxon>
        <taxon>Euarchontoglires</taxon>
        <taxon>Primates</taxon>
        <taxon>Haplorrhini</taxon>
        <taxon>Catarrhini</taxon>
        <taxon>Hominidae</taxon>
        <taxon>Homo</taxon>
    </lineage>
</organism>
<gene>
    <name type="primary">LGR5</name>
    <name type="synonym">GPR49</name>
    <name type="synonym">GPR67</name>
</gene>
<protein>
    <recommendedName>
        <fullName>Leucine-rich repeat-containing G-protein coupled receptor 5</fullName>
    </recommendedName>
    <alternativeName>
        <fullName>G-protein coupled receptor 49</fullName>
    </alternativeName>
    <alternativeName>
        <fullName>G-protein coupled receptor 67</fullName>
    </alternativeName>
    <alternativeName>
        <fullName>G-protein coupled receptor HG38</fullName>
    </alternativeName>
</protein>
<reference key="1">
    <citation type="journal article" date="1998" name="Biochem. Biophys. Res. Commun.">
        <title>Identification and cloning of an orphan G protein-coupled receptor of the glycoprotein hormone receptor subfamily.</title>
        <authorList>
            <person name="McDonald T."/>
            <person name="Wang R."/>
            <person name="Bailey W."/>
            <person name="Xie G."/>
            <person name="Chen F."/>
            <person name="Caskey C.T."/>
            <person name="Liu Q."/>
        </authorList>
    </citation>
    <scope>NUCLEOTIDE SEQUENCE [MRNA] (ISOFORM 1)</scope>
</reference>
<reference key="2">
    <citation type="journal article" date="1998" name="Mol. Endocrinol.">
        <title>Characterization of two LGR genes homologous to gonadotropin and thyrotropin receptors with extracellular leucine-rich repeats and a G protein-coupled, seven-transmembrane region.</title>
        <authorList>
            <person name="Hsu S.Y."/>
            <person name="Liang S.-G."/>
            <person name="Hsueh A.J.W."/>
        </authorList>
    </citation>
    <scope>NUCLEOTIDE SEQUENCE [MRNA] (ISOFORM 1)</scope>
    <source>
        <tissue>Placenta</tissue>
    </source>
</reference>
<reference key="3">
    <citation type="submission" date="2010-04" db="EMBL/GenBank/DDBJ databases">
        <title>Alternatively spliced transcript of the GPR49-mRNA occur in different tumor cell lines and soft tissue sarcoma.</title>
        <authorList>
            <person name="Rot S."/>
            <person name="Taubert H."/>
            <person name="Bache M."/>
            <person name="Vordermark D."/>
            <person name="Kappler M."/>
        </authorList>
    </citation>
    <scope>NUCLEOTIDE SEQUENCE [MRNA] (ISOFORM 3)</scope>
</reference>
<reference key="4">
    <citation type="journal article" date="2006" name="Nature">
        <title>The finished DNA sequence of human chromosome 12.</title>
        <authorList>
            <person name="Scherer S.E."/>
            <person name="Muzny D.M."/>
            <person name="Buhay C.J."/>
            <person name="Chen R."/>
            <person name="Cree A."/>
            <person name="Ding Y."/>
            <person name="Dugan-Rocha S."/>
            <person name="Gill R."/>
            <person name="Gunaratne P."/>
            <person name="Harris R.A."/>
            <person name="Hawes A.C."/>
            <person name="Hernandez J."/>
            <person name="Hodgson A.V."/>
            <person name="Hume J."/>
            <person name="Jackson A."/>
            <person name="Khan Z.M."/>
            <person name="Kovar-Smith C."/>
            <person name="Lewis L.R."/>
            <person name="Lozado R.J."/>
            <person name="Metzker M.L."/>
            <person name="Milosavljevic A."/>
            <person name="Miner G.R."/>
            <person name="Montgomery K.T."/>
            <person name="Morgan M.B."/>
            <person name="Nazareth L.V."/>
            <person name="Scott G."/>
            <person name="Sodergren E."/>
            <person name="Song X.-Z."/>
            <person name="Steffen D."/>
            <person name="Lovering R.C."/>
            <person name="Wheeler D.A."/>
            <person name="Worley K.C."/>
            <person name="Yuan Y."/>
            <person name="Zhang Z."/>
            <person name="Adams C.Q."/>
            <person name="Ansari-Lari M.A."/>
            <person name="Ayele M."/>
            <person name="Brown M.J."/>
            <person name="Chen G."/>
            <person name="Chen Z."/>
            <person name="Clerc-Blankenburg K.P."/>
            <person name="Davis C."/>
            <person name="Delgado O."/>
            <person name="Dinh H.H."/>
            <person name="Draper H."/>
            <person name="Gonzalez-Garay M.L."/>
            <person name="Havlak P."/>
            <person name="Jackson L.R."/>
            <person name="Jacob L.S."/>
            <person name="Kelly S.H."/>
            <person name="Li L."/>
            <person name="Li Z."/>
            <person name="Liu J."/>
            <person name="Liu W."/>
            <person name="Lu J."/>
            <person name="Maheshwari M."/>
            <person name="Nguyen B.-V."/>
            <person name="Okwuonu G.O."/>
            <person name="Pasternak S."/>
            <person name="Perez L.M."/>
            <person name="Plopper F.J.H."/>
            <person name="Santibanez J."/>
            <person name="Shen H."/>
            <person name="Tabor P.E."/>
            <person name="Verduzco D."/>
            <person name="Waldron L."/>
            <person name="Wang Q."/>
            <person name="Williams G.A."/>
            <person name="Zhang J."/>
            <person name="Zhou J."/>
            <person name="Allen C.C."/>
            <person name="Amin A.G."/>
            <person name="Anyalebechi V."/>
            <person name="Bailey M."/>
            <person name="Barbaria J.A."/>
            <person name="Bimage K.E."/>
            <person name="Bryant N.P."/>
            <person name="Burch P.E."/>
            <person name="Burkett C.E."/>
            <person name="Burrell K.L."/>
            <person name="Calderon E."/>
            <person name="Cardenas V."/>
            <person name="Carter K."/>
            <person name="Casias K."/>
            <person name="Cavazos I."/>
            <person name="Cavazos S.R."/>
            <person name="Ceasar H."/>
            <person name="Chacko J."/>
            <person name="Chan S.N."/>
            <person name="Chavez D."/>
            <person name="Christopoulos C."/>
            <person name="Chu J."/>
            <person name="Cockrell R."/>
            <person name="Cox C.D."/>
            <person name="Dang M."/>
            <person name="Dathorne S.R."/>
            <person name="David R."/>
            <person name="Davis C.M."/>
            <person name="Davy-Carroll L."/>
            <person name="Deshazo D.R."/>
            <person name="Donlin J.E."/>
            <person name="D'Souza L."/>
            <person name="Eaves K.A."/>
            <person name="Egan A."/>
            <person name="Emery-Cohen A.J."/>
            <person name="Escotto M."/>
            <person name="Flagg N."/>
            <person name="Forbes L.D."/>
            <person name="Gabisi A.M."/>
            <person name="Garza M."/>
            <person name="Hamilton C."/>
            <person name="Henderson N."/>
            <person name="Hernandez O."/>
            <person name="Hines S."/>
            <person name="Hogues M.E."/>
            <person name="Huang M."/>
            <person name="Idlebird D.G."/>
            <person name="Johnson R."/>
            <person name="Jolivet A."/>
            <person name="Jones S."/>
            <person name="Kagan R."/>
            <person name="King L.M."/>
            <person name="Leal B."/>
            <person name="Lebow H."/>
            <person name="Lee S."/>
            <person name="LeVan J.M."/>
            <person name="Lewis L.C."/>
            <person name="London P."/>
            <person name="Lorensuhewa L.M."/>
            <person name="Loulseged H."/>
            <person name="Lovett D.A."/>
            <person name="Lucier A."/>
            <person name="Lucier R.L."/>
            <person name="Ma J."/>
            <person name="Madu R.C."/>
            <person name="Mapua P."/>
            <person name="Martindale A.D."/>
            <person name="Martinez E."/>
            <person name="Massey E."/>
            <person name="Mawhiney S."/>
            <person name="Meador M.G."/>
            <person name="Mendez S."/>
            <person name="Mercado C."/>
            <person name="Mercado I.C."/>
            <person name="Merritt C.E."/>
            <person name="Miner Z.L."/>
            <person name="Minja E."/>
            <person name="Mitchell T."/>
            <person name="Mohabbat F."/>
            <person name="Mohabbat K."/>
            <person name="Montgomery B."/>
            <person name="Moore N."/>
            <person name="Morris S."/>
            <person name="Munidasa M."/>
            <person name="Ngo R.N."/>
            <person name="Nguyen N.B."/>
            <person name="Nickerson E."/>
            <person name="Nwaokelemeh O.O."/>
            <person name="Nwokenkwo S."/>
            <person name="Obregon M."/>
            <person name="Oguh M."/>
            <person name="Oragunye N."/>
            <person name="Oviedo R.J."/>
            <person name="Parish B.J."/>
            <person name="Parker D.N."/>
            <person name="Parrish J."/>
            <person name="Parks K.L."/>
            <person name="Paul H.A."/>
            <person name="Payton B.A."/>
            <person name="Perez A."/>
            <person name="Perrin W."/>
            <person name="Pickens A."/>
            <person name="Primus E.L."/>
            <person name="Pu L.-L."/>
            <person name="Puazo M."/>
            <person name="Quiles M.M."/>
            <person name="Quiroz J.B."/>
            <person name="Rabata D."/>
            <person name="Reeves K."/>
            <person name="Ruiz S.J."/>
            <person name="Shao H."/>
            <person name="Sisson I."/>
            <person name="Sonaike T."/>
            <person name="Sorelle R.P."/>
            <person name="Sutton A.E."/>
            <person name="Svatek A.F."/>
            <person name="Svetz L.A."/>
            <person name="Tamerisa K.S."/>
            <person name="Taylor T.R."/>
            <person name="Teague B."/>
            <person name="Thomas N."/>
            <person name="Thorn R.D."/>
            <person name="Trejos Z.Y."/>
            <person name="Trevino B.K."/>
            <person name="Ukegbu O.N."/>
            <person name="Urban J.B."/>
            <person name="Vasquez L.I."/>
            <person name="Vera V.A."/>
            <person name="Villasana D.M."/>
            <person name="Wang L."/>
            <person name="Ward-Moore S."/>
            <person name="Warren J.T."/>
            <person name="Wei X."/>
            <person name="White F."/>
            <person name="Williamson A.L."/>
            <person name="Wleczyk R."/>
            <person name="Wooden H.S."/>
            <person name="Wooden S.H."/>
            <person name="Yen J."/>
            <person name="Yoon L."/>
            <person name="Yoon V."/>
            <person name="Zorrilla S.E."/>
            <person name="Nelson D."/>
            <person name="Kucherlapati R."/>
            <person name="Weinstock G."/>
            <person name="Gibbs R.A."/>
        </authorList>
    </citation>
    <scope>NUCLEOTIDE SEQUENCE [LARGE SCALE GENOMIC DNA]</scope>
</reference>
<reference key="5">
    <citation type="journal article" date="2004" name="Genome Res.">
        <title>The status, quality, and expansion of the NIH full-length cDNA project: the Mammalian Gene Collection (MGC).</title>
        <authorList>
            <consortium name="The MGC Project Team"/>
        </authorList>
    </citation>
    <scope>NUCLEOTIDE SEQUENCE [LARGE SCALE MRNA] (ISOFORMS 1 AND 2)</scope>
    <scope>VARIANT ALA-666</scope>
</reference>
<reference key="6">
    <citation type="journal article" date="2003" name="Hepatology">
        <title>Overexpression of orphan G-protein-coupled receptor, Gpr49, in human hepatocellular carcinomas with beta-catenin mutations.</title>
        <authorList>
            <person name="Yamamoto Y."/>
            <person name="Sakamoto M."/>
            <person name="Fujii G."/>
            <person name="Tsuiji H."/>
            <person name="Kenetaka K."/>
            <person name="Asaka M."/>
            <person name="Hirohashi S."/>
        </authorList>
    </citation>
    <scope>TISSUE SPECIFICITY</scope>
</reference>
<reference key="7">
    <citation type="journal article" date="2006" name="Cancer Biol. Ther.">
        <title>Identification of overexpression of orphan G protein-coupled receptor GPR49 in human colon and ovarian primary tumors.</title>
        <authorList>
            <person name="McClanahan T."/>
            <person name="Koseoglu S."/>
            <person name="Smith K."/>
            <person name="Grein J."/>
            <person name="Gustafson E."/>
            <person name="Black S."/>
            <person name="Kirschmeier P."/>
            <person name="Samatar A.A."/>
        </authorList>
    </citation>
    <scope>TISSUE SPECIFICITY</scope>
</reference>
<reference key="8">
    <citation type="journal article" date="2008" name="ScientificWorldJournal">
        <title>Immunostaining of Lgr5, an intestinal stem cell marker, in normal and premalignant human gastrointestinal tissue.</title>
        <authorList>
            <person name="Becker L."/>
            <person name="Huang Q."/>
            <person name="Mashimo H."/>
        </authorList>
    </citation>
    <scope>TISSUE SPECIFICITY</scope>
</reference>
<reference key="9">
    <citation type="journal article" date="2011" name="EMBO Rep.">
        <title>LGR4 and LGR5 are R-spondin receptors mediating Wnt/beta-catenin and Wnt/PCP signalling.</title>
        <authorList>
            <person name="Glinka A."/>
            <person name="Dolde C."/>
            <person name="Kirsch N."/>
            <person name="Huang Y.L."/>
            <person name="Kazanskaya O."/>
            <person name="Ingelfinger D."/>
            <person name="Boutros M."/>
            <person name="Cruciat C.M."/>
            <person name="Niehrs C."/>
        </authorList>
    </citation>
    <scope>FUNCTION</scope>
    <scope>INTERACTION WITH RSPO1; RSPO2; RSPO3 AND RSPO4</scope>
</reference>
<reference key="10">
    <citation type="journal article" date="2011" name="Nature">
        <title>Lgr5 homologues associate with Wnt receptors and mediate R-spondin signalling.</title>
        <authorList>
            <person name="de Lau W."/>
            <person name="Barker N."/>
            <person name="Low T.Y."/>
            <person name="Koo B.K."/>
            <person name="Li V.S."/>
            <person name="Teunissen H."/>
            <person name="Kujala P."/>
            <person name="Haegebarth A."/>
            <person name="Peters P.J."/>
            <person name="van de Wetering M."/>
            <person name="Stange D.E."/>
            <person name="van Es J.E."/>
            <person name="Guardavaccaro D."/>
            <person name="Schasfoort R.B."/>
            <person name="Mohri Y."/>
            <person name="Nishimori K."/>
            <person name="Mohammed S."/>
            <person name="Heck A.J."/>
            <person name="Clevers H."/>
        </authorList>
    </citation>
    <scope>FUNCTION</scope>
    <scope>INTERACTION WITH RSPO1; RSPO2; RSPO3 AND RSPO4</scope>
</reference>
<reference key="11">
    <citation type="journal article" date="2011" name="Proc. Natl. Acad. Sci. U.S.A.">
        <title>R-spondins function as ligands of the orphan receptors LGR4 and LGR5 to regulate Wnt/beta-catenin signaling.</title>
        <authorList>
            <person name="Carmon K.S."/>
            <person name="Gong X."/>
            <person name="Lin Q."/>
            <person name="Thomas A."/>
            <person name="Liu Q."/>
        </authorList>
    </citation>
    <scope>FUNCTION</scope>
    <scope>SUBCELLULAR LOCATION</scope>
    <scope>INTERACTION WITH RSPO1; RSPO2; RSPO3 AND RSPO4</scope>
</reference>
<reference key="12">
    <citation type="journal article" date="2012" name="PLoS ONE">
        <title>R-Spondin potentiates Wnt/beta-catenin signaling through orphan receptors LGR4 and LGR5.</title>
        <authorList>
            <person name="Ruffner H."/>
            <person name="Sprunger J."/>
            <person name="Charlat O."/>
            <person name="Leighton-Davies J."/>
            <person name="Grosshans B."/>
            <person name="Salathe A."/>
            <person name="Zietzling S."/>
            <person name="Beck V."/>
            <person name="Therier M."/>
            <person name="Isken A."/>
            <person name="Xie Y."/>
            <person name="Zhang Y."/>
            <person name="Hao H."/>
            <person name="Shi X."/>
            <person name="Liu D."/>
            <person name="Song Q."/>
            <person name="Clay I."/>
            <person name="Hintzen G."/>
            <person name="Tchorz J."/>
            <person name="Bouchez L.C."/>
            <person name="Michaud G."/>
            <person name="Finan P."/>
            <person name="Myer V.E."/>
            <person name="Bouwmeester T."/>
            <person name="Porter J."/>
            <person name="Hild M."/>
            <person name="Bassilana F."/>
            <person name="Parker C.N."/>
            <person name="Cong F."/>
        </authorList>
    </citation>
    <scope>FUNCTION</scope>
    <scope>SUBCELLULAR LOCATION</scope>
    <scope>INTERACTION WITH RSPO1</scope>
</reference>
<reference key="13">
    <citation type="journal article" date="2013" name="J. Biol. Chem.">
        <title>Constitutive Internalization of the Leucine-rich G Protein-coupled Receptor-5 (LGR5) to the Trans-Golgi Network.</title>
        <authorList>
            <person name="Snyder J.C."/>
            <person name="Rochelle L.K."/>
            <person name="Lyerly H.K."/>
            <person name="Caron M.G."/>
            <person name="Barak L.S."/>
        </authorList>
    </citation>
    <scope>SUBCELLULAR LOCATION</scope>
    <scope>MUTAGENESIS OF SER-861 AND SER-864</scope>
</reference>
<reference key="14">
    <citation type="journal article" date="2018" name="Nature">
        <title>RSPO2 inhibition of RNF43 and ZNRF3 governs limb development independently of LGR4/5/6.</title>
        <authorList>
            <person name="Szenker-Ravi E."/>
            <person name="Altunoglu U."/>
            <person name="Leushacke M."/>
            <person name="Bosso-Lefevre C."/>
            <person name="Khatoo M."/>
            <person name="Thi Tran H."/>
            <person name="Naert T."/>
            <person name="Noelanders R."/>
            <person name="Hajamohideen A."/>
            <person name="Beneteau C."/>
            <person name="de Sousa S.B."/>
            <person name="Karaman B."/>
            <person name="Latypova X."/>
            <person name="Basaran S."/>
            <person name="Yuecel E.B."/>
            <person name="Tan T.T."/>
            <person name="Vlaminck L."/>
            <person name="Nayak S.S."/>
            <person name="Shukla A."/>
            <person name="Girisha K.M."/>
            <person name="Le Caignec C."/>
            <person name="Soshnikova N."/>
            <person name="Uyguner Z.O."/>
            <person name="Vleminckx K."/>
            <person name="Barker N."/>
            <person name="Kayserili H."/>
            <person name="Reversade B."/>
        </authorList>
    </citation>
    <scope>INTERACTION WITH RSPO2</scope>
</reference>
<reference key="15">
    <citation type="journal article" date="2013" name="Cell Rep.">
        <title>Structure of stem cell growth factor R-spondin 1 in complex with the ectodomain of its receptor LGR5.</title>
        <authorList>
            <person name="Peng W.C."/>
            <person name="de Lau W."/>
            <person name="Forneris F."/>
            <person name="Granneman J.C."/>
            <person name="Huch M."/>
            <person name="Clevers H."/>
            <person name="Gros P."/>
        </authorList>
    </citation>
    <scope>X-RAY CRYSTALLOGRAPHY (3.2 ANGSTROMS) OF 22-543 IN COMPLEX WITH RSPO1</scope>
    <scope>FUNCTION</scope>
    <scope>MUTAGENESIS OF ASP-146; ASP-170 AND ALA-190</scope>
    <scope>DISULFIDE BONDS</scope>
</reference>
<reference key="16">
    <citation type="journal article" date="2013" name="Genes Dev.">
        <title>The structural basis of R-spondin recognition by LGR5 and RNF43.</title>
        <authorList>
            <person name="Chen P.H."/>
            <person name="Chen X."/>
            <person name="Lin Z."/>
            <person name="Fang D."/>
            <person name="He X."/>
        </authorList>
    </citation>
    <scope>X-RAY CRYSTALLOGRAPHY (2.5 ANGSTROMS) OF 32-557 IN COMPLEX WITH RNF43 AND RSPO1</scope>
    <scope>SUBUNIT</scope>
    <scope>DISULFIDE BONDS</scope>
    <scope>GLYCOSYLATION AT ASN-208</scope>
</reference>
<sequence>MDTSRLGVLLSLPVLLQLATGGSSPRSGVLLRGCPTHCHCEPDGRMLLRVDCSDLGLSELPSNLSVFTSYLDLSMNNISQLLPNPLPSLRFLEELRLAGNALTYIPKGAFTGLYSLKVLMLQNNQLRHVPTEALQNLRSLQSLRLDANHISYVPPSCFSGLHSLRHLWLDDNALTEIPVQAFRSLSALQAMTLALNKIHHIPDYAFGNLSSLVVLHLHNNRIHSLGKKCFDGLHSLETLDLNYNNLDEFPTAIRTLSNLKELGFHSNNIRSIPEKAFVGNPSLITIHFYDNPIQFVGRSAFQHLPELRTLTLNGASQITEFPDLTGTANLESLTLTGAQISSLPQTVCNQLPNLQVLDLSYNLLEDLPSFSVCQKLQKIDLRHNEIYEIKVDTFQQLLSLRSLNLAWNKIAIIHPNAFSTLPSLIKLDLSSNLLSSFPITGLHGLTHLKLTGNHALQSLISSENFPELKVIEMPYAYQCCAFGVCENAYKISNQWNKGDNSSMDDLHKKDAGMFQAQDERDLEDFLLDFEEDLKALHSVQCSPSPGPFKPCEHLLDGWLIRIGVWTIAVLALTCNALVTSTVFRSPLYISPIKLLIGVIAAVNMLTGVSSAVLAGVDAFTFGSFARHGAWWENGVGCHVIGFLSIFASESSVFLLTLAALERGFSVKYSAKFETKAPFSSLKVIILLCALLALTMAAVPLLGGSKYGASPLCLPLPFGEPSTMGYMVALILLNSLCFLMMTIAYTKLYCNLDKGDLENIWDCSMVKHIALLLFTNCILNCPVAFLSFSSLINLTFISPEVIKFILLVVVPLPACLNPLLYILFNPHFKEDLVSLRKQTYVWTRSKHPSLMSINSDDVEKQSCDSTQALVTFTSSSITYDLPPSSVPSPAYPVTESCHLSSVAFVPCL</sequence>
<comment type="function">
    <text evidence="7 8 9 10 13">Receptor for R-spondins that potentiates the canonical Wnt signaling pathway and acts as a stem cell marker of the intestinal epithelium and the hair follicle. Upon binding to R-spondins (RSPO1, RSPO2, RSPO3 or RSPO4), associates with phosphorylated LRP6 and frizzled receptors that are activated by extracellular Wnt receptors, triggering the canonical Wnt signaling pathway to increase expression of target genes. In contrast to classical G-protein coupled receptors, does not activate heterotrimeric G-proteins to transduce the signal. Involved in the development and/or maintenance of the adult intestinal stem cells during postembryonic development.</text>
</comment>
<comment type="subunit">
    <text evidence="7 8 9 10 12 13 14">Identified in a complex composed of RNF43, LGR5 and RSPO1 (PubMed:21693646, PubMed:21727895, PubMed:21909076, PubMed:22815884, PubMed:23756651, PubMed:23809763). Also interacts with other R-spondin ligands, including RSPO2, RSPO3 and RSPO4 (PubMed:21693646, PubMed:21727895, PubMed:21909076, PubMed:29769720).</text>
</comment>
<comment type="interaction">
    <interactant intactId="EBI-4402067">
        <id>O75473</id>
    </interactant>
    <interactant intactId="EBI-10045219">
        <id>Q2MKA7</id>
        <label>RSPO1</label>
    </interactant>
    <organismsDiffer>false</organismsDiffer>
    <experiments>3</experiments>
</comment>
<comment type="subcellular location">
    <subcellularLocation>
        <location>Cell membrane</location>
        <topology>Multi-pass membrane protein</topology>
    </subcellularLocation>
    <subcellularLocation>
        <location>Golgi apparatus</location>
        <location>trans-Golgi network membrane</location>
        <topology>Multi-pass membrane protein</topology>
    </subcellularLocation>
    <text evidence="11">Rapidly and constitutively internalized to the trans-Golgi network at steady state. Internalization to the trans-Golgi network may be the result of phosphorylation at Ser-861 and Ser-864; however, the phosphorylation event has not been proven (PubMed:23439653).</text>
</comment>
<comment type="alternative products">
    <event type="alternative splicing"/>
    <isoform>
        <id>O75473-1</id>
        <name>1</name>
        <sequence type="displayed"/>
    </isoform>
    <isoform>
        <id>O75473-2</id>
        <name>2</name>
        <sequence type="described" ref="VSP_037746"/>
    </isoform>
    <isoform>
        <id>O75473-3</id>
        <name>3</name>
        <sequence type="described" ref="VSP_054782"/>
    </isoform>
</comment>
<comment type="tissue specificity">
    <text evidence="3 5 6">Expressed in skeletal muscle, placenta, spinal cord, and various region of brain. Expressed at the base of crypts in colonic and small mucosa stem cells. In premalignant cancer expression is not restricted to the cript base. Overexpressed in cancers of the ovary, colon and liver.</text>
</comment>
<comment type="miscellaneous">
    <text evidence="18">LGR5 is used as a marker of adult tissue stem cells in the intestine, stomach, hair follicle, and mammary epithelium.</text>
</comment>
<comment type="similarity">
    <text evidence="2">Belongs to the G-protein coupled receptor 1 family.</text>
</comment>
<name>LGR5_HUMAN</name>
<accession>O75473</accession>
<accession>D8MCT0</accession>
<accession>Q4VAM0</accession>
<accession>Q4VAM2</accession>
<accession>Q9UP75</accession>
<feature type="signal peptide" evidence="1">
    <location>
        <begin position="1"/>
        <end position="21"/>
    </location>
</feature>
<feature type="chain" id="PRO_0000012794" description="Leucine-rich repeat-containing G-protein coupled receptor 5">
    <location>
        <begin position="22"/>
        <end position="907"/>
    </location>
</feature>
<feature type="topological domain" description="Extracellular" evidence="1">
    <location>
        <begin position="22"/>
        <end position="561"/>
    </location>
</feature>
<feature type="transmembrane region" description="Helical; Name=1" evidence="1">
    <location>
        <begin position="562"/>
        <end position="582"/>
    </location>
</feature>
<feature type="topological domain" description="Cytoplasmic" evidence="1">
    <location>
        <begin position="583"/>
        <end position="593"/>
    </location>
</feature>
<feature type="transmembrane region" description="Helical; Name=2" evidence="1">
    <location>
        <begin position="594"/>
        <end position="614"/>
    </location>
</feature>
<feature type="topological domain" description="Extracellular" evidence="1">
    <location>
        <begin position="615"/>
        <end position="638"/>
    </location>
</feature>
<feature type="transmembrane region" description="Helical; Name=3" evidence="1">
    <location>
        <begin position="639"/>
        <end position="659"/>
    </location>
</feature>
<feature type="topological domain" description="Cytoplasmic" evidence="1">
    <location>
        <begin position="660"/>
        <end position="682"/>
    </location>
</feature>
<feature type="transmembrane region" description="Helical; Name=4" evidence="1">
    <location>
        <begin position="683"/>
        <end position="703"/>
    </location>
</feature>
<feature type="topological domain" description="Extracellular" evidence="1">
    <location>
        <begin position="704"/>
        <end position="722"/>
    </location>
</feature>
<feature type="transmembrane region" description="Helical; Name=5" evidence="1">
    <location>
        <begin position="723"/>
        <end position="743"/>
    </location>
</feature>
<feature type="topological domain" description="Cytoplasmic" evidence="1">
    <location>
        <begin position="744"/>
        <end position="767"/>
    </location>
</feature>
<feature type="transmembrane region" description="Helical; Name=6" evidence="1">
    <location>
        <begin position="768"/>
        <end position="788"/>
    </location>
</feature>
<feature type="topological domain" description="Extracellular" evidence="1">
    <location>
        <begin position="789"/>
        <end position="802"/>
    </location>
</feature>
<feature type="transmembrane region" description="Helical; Name=7" evidence="1">
    <location>
        <begin position="803"/>
        <end position="823"/>
    </location>
</feature>
<feature type="topological domain" description="Cytoplasmic" evidence="1">
    <location>
        <begin position="824"/>
        <end position="907"/>
    </location>
</feature>
<feature type="domain" description="LRRNT">
    <location>
        <begin position="25"/>
        <end position="66"/>
    </location>
</feature>
<feature type="repeat" description="LRR 1">
    <location>
        <begin position="67"/>
        <end position="90"/>
    </location>
</feature>
<feature type="repeat" description="LRR 2">
    <location>
        <begin position="91"/>
        <end position="112"/>
    </location>
</feature>
<feature type="repeat" description="LRR 3">
    <location>
        <begin position="115"/>
        <end position="136"/>
    </location>
</feature>
<feature type="repeat" description="LRR 4">
    <location>
        <begin position="139"/>
        <end position="160"/>
    </location>
</feature>
<feature type="repeat" description="LRR 5">
    <location>
        <begin position="163"/>
        <end position="184"/>
    </location>
</feature>
<feature type="repeat" description="LRR 6">
    <location>
        <begin position="187"/>
        <end position="208"/>
    </location>
</feature>
<feature type="repeat" description="LRR 7">
    <location>
        <begin position="211"/>
        <end position="232"/>
    </location>
</feature>
<feature type="repeat" description="LRR 8">
    <location>
        <begin position="235"/>
        <end position="256"/>
    </location>
</feature>
<feature type="repeat" description="LRR 9">
    <location>
        <begin position="258"/>
        <end position="279"/>
    </location>
</feature>
<feature type="repeat" description="LRR 10">
    <location>
        <begin position="282"/>
        <end position="303"/>
    </location>
</feature>
<feature type="repeat" description="LRR 11">
    <location>
        <begin position="306"/>
        <end position="328"/>
    </location>
</feature>
<feature type="repeat" description="LRR 12">
    <location>
        <begin position="329"/>
        <end position="350"/>
    </location>
</feature>
<feature type="repeat" description="LRR 13">
    <location>
        <begin position="353"/>
        <end position="374"/>
    </location>
</feature>
<feature type="repeat" description="LRR 14">
    <location>
        <begin position="375"/>
        <end position="396"/>
    </location>
</feature>
<feature type="repeat" description="LRR 15">
    <location>
        <begin position="399"/>
        <end position="420"/>
    </location>
</feature>
<feature type="repeat" description="LRR 16">
    <location>
        <begin position="423"/>
        <end position="446"/>
    </location>
</feature>
<feature type="glycosylation site" description="N-linked (GlcNAc...) asparagine" evidence="1">
    <location>
        <position position="63"/>
    </location>
</feature>
<feature type="glycosylation site" description="N-linked (GlcNAc...) asparagine" evidence="1">
    <location>
        <position position="77"/>
    </location>
</feature>
<feature type="glycosylation site" description="N-linked (GlcNAc...) asparagine" evidence="12">
    <location>
        <position position="208"/>
    </location>
</feature>
<feature type="glycosylation site" description="N-linked (GlcNAc...) asparagine" evidence="1">
    <location>
        <position position="500"/>
    </location>
</feature>
<feature type="glycosylation site" description="N-linked (GlcNAc...) asparagine" evidence="1">
    <location>
        <position position="792"/>
    </location>
</feature>
<feature type="disulfide bond">
    <location>
        <begin position="34"/>
        <end position="40"/>
    </location>
</feature>
<feature type="disulfide bond">
    <location>
        <begin position="38"/>
        <end position="52"/>
    </location>
</feature>
<feature type="disulfide bond">
    <location>
        <begin position="348"/>
        <end position="373"/>
    </location>
</feature>
<feature type="disulfide bond">
    <location>
        <begin position="479"/>
        <end position="541"/>
    </location>
</feature>
<feature type="disulfide bond" evidence="2">
    <location>
        <begin position="637"/>
        <end position="712"/>
    </location>
</feature>
<feature type="splice variant" id="VSP_054782" description="In isoform 3." evidence="16">
    <location>
        <begin position="143"/>
        <end position="214"/>
    </location>
</feature>
<feature type="splice variant" id="VSP_037746" description="In isoform 2." evidence="15">
    <location>
        <begin position="263"/>
        <end position="286"/>
    </location>
</feature>
<feature type="sequence variant" id="VAR_049411" description="In dbSNP:rs12303775.">
    <original>H</original>
    <variation>R</variation>
    <location>
        <position position="383"/>
    </location>
</feature>
<feature type="sequence variant" id="VAR_049412" description="In dbSNP:rs17109924." evidence="4">
    <original>V</original>
    <variation>A</variation>
    <location>
        <position position="666"/>
    </location>
</feature>
<feature type="mutagenesis site" description="Abolishes activation of Wnt signaling." evidence="13">
    <original>D</original>
    <variation>F</variation>
    <location>
        <position position="146"/>
    </location>
</feature>
<feature type="mutagenesis site" description="Abolishes activation of Wnt signaling." evidence="13">
    <original>D</original>
    <variation>F</variation>
    <location>
        <position position="170"/>
    </location>
</feature>
<feature type="mutagenesis site" description="Abolishes activation of Wnt signaling." evidence="13">
    <original>A</original>
    <variation>D</variation>
    <location>
        <position position="190"/>
    </location>
</feature>
<feature type="mutagenesis site" description="Impaired internalization to the trans-Golgi network; when associated with A-864." evidence="11">
    <original>S</original>
    <variation>A</variation>
    <location>
        <position position="861"/>
    </location>
</feature>
<feature type="mutagenesis site" description="Impaired internalization to the trans-Golgi network; when associated with A-861." evidence="11">
    <original>S</original>
    <variation>A</variation>
    <location>
        <position position="864"/>
    </location>
</feature>
<feature type="sequence conflict" description="In Ref. 2; AAC77911." evidence="17" ref="2">
    <original>R</original>
    <variation>H</variation>
    <location>
        <position position="90"/>
    </location>
</feature>
<feature type="sequence conflict" description="In Ref. 2; AAC77911." evidence="17" ref="2">
    <original>L</original>
    <variation>W</variation>
    <location>
        <position position="212"/>
    </location>
</feature>
<feature type="strand" evidence="21">
    <location>
        <begin position="39"/>
        <end position="42"/>
    </location>
</feature>
<feature type="turn" evidence="20">
    <location>
        <begin position="44"/>
        <end position="46"/>
    </location>
</feature>
<feature type="strand" evidence="21">
    <location>
        <begin position="48"/>
        <end position="51"/>
    </location>
</feature>
<feature type="strand" evidence="21">
    <location>
        <begin position="68"/>
        <end position="72"/>
    </location>
</feature>
<feature type="helix" evidence="21">
    <location>
        <begin position="86"/>
        <end position="88"/>
    </location>
</feature>
<feature type="strand" evidence="21">
    <location>
        <begin position="94"/>
        <end position="96"/>
    </location>
</feature>
<feature type="turn" evidence="21">
    <location>
        <begin position="107"/>
        <end position="112"/>
    </location>
</feature>
<feature type="strand" evidence="21">
    <location>
        <begin position="118"/>
        <end position="120"/>
    </location>
</feature>
<feature type="turn" evidence="21">
    <location>
        <begin position="133"/>
        <end position="136"/>
    </location>
</feature>
<feature type="strand" evidence="21">
    <location>
        <begin position="142"/>
        <end position="144"/>
    </location>
</feature>
<feature type="turn" evidence="21">
    <location>
        <begin position="155"/>
        <end position="160"/>
    </location>
</feature>
<feature type="strand" evidence="21">
    <location>
        <begin position="166"/>
        <end position="168"/>
    </location>
</feature>
<feature type="helix" evidence="21">
    <location>
        <begin position="181"/>
        <end position="183"/>
    </location>
</feature>
<feature type="strand" evidence="21">
    <location>
        <begin position="190"/>
        <end position="192"/>
    </location>
</feature>
<feature type="turn" evidence="21">
    <location>
        <begin position="203"/>
        <end position="208"/>
    </location>
</feature>
<feature type="strand" evidence="21">
    <location>
        <begin position="214"/>
        <end position="216"/>
    </location>
</feature>
<feature type="turn" evidence="21">
    <location>
        <begin position="227"/>
        <end position="232"/>
    </location>
</feature>
<feature type="strand" evidence="21">
    <location>
        <begin position="238"/>
        <end position="240"/>
    </location>
</feature>
<feature type="helix" evidence="21">
    <location>
        <begin position="251"/>
        <end position="255"/>
    </location>
</feature>
<feature type="strand" evidence="21">
    <location>
        <begin position="261"/>
        <end position="263"/>
    </location>
</feature>
<feature type="turn" evidence="21">
    <location>
        <begin position="274"/>
        <end position="279"/>
    </location>
</feature>
<feature type="strand" evidence="21">
    <location>
        <begin position="285"/>
        <end position="287"/>
    </location>
</feature>
<feature type="turn" evidence="20">
    <location>
        <begin position="298"/>
        <end position="303"/>
    </location>
</feature>
<feature type="strand" evidence="21">
    <location>
        <begin position="309"/>
        <end position="314"/>
    </location>
</feature>
<feature type="strand" evidence="21">
    <location>
        <begin position="331"/>
        <end position="338"/>
    </location>
</feature>
<feature type="helix" evidence="21">
    <location>
        <begin position="347"/>
        <end position="350"/>
    </location>
</feature>
<feature type="strand" evidence="21">
    <location>
        <begin position="356"/>
        <end position="358"/>
    </location>
</feature>
<feature type="strand" evidence="21">
    <location>
        <begin position="378"/>
        <end position="380"/>
    </location>
</feature>
<feature type="turn" evidence="21">
    <location>
        <begin position="391"/>
        <end position="396"/>
    </location>
</feature>
<feature type="strand" evidence="21">
    <location>
        <begin position="402"/>
        <end position="404"/>
    </location>
</feature>
<feature type="turn" evidence="21">
    <location>
        <begin position="415"/>
        <end position="420"/>
    </location>
</feature>
<feature type="strand" evidence="21">
    <location>
        <begin position="426"/>
        <end position="428"/>
    </location>
</feature>
<feature type="strand" evidence="21">
    <location>
        <begin position="446"/>
        <end position="449"/>
    </location>
</feature>
<feature type="turn" evidence="21">
    <location>
        <begin position="462"/>
        <end position="464"/>
    </location>
</feature>
<feature type="strand" evidence="21">
    <location>
        <begin position="470"/>
        <end position="472"/>
    </location>
</feature>
<feature type="helix" evidence="21">
    <location>
        <begin position="476"/>
        <end position="482"/>
    </location>
</feature>
<feature type="helix" evidence="19">
    <location>
        <begin position="523"/>
        <end position="533"/>
    </location>
</feature>
<feature type="strand" evidence="19">
    <location>
        <begin position="534"/>
        <end position="536"/>
    </location>
</feature>
<feature type="strand" evidence="19">
    <location>
        <begin position="540"/>
        <end position="542"/>
    </location>
</feature>
<proteinExistence type="evidence at protein level"/>
<keyword id="KW-0002">3D-structure</keyword>
<keyword id="KW-0025">Alternative splicing</keyword>
<keyword id="KW-1003">Cell membrane</keyword>
<keyword id="KW-1015">Disulfide bond</keyword>
<keyword id="KW-0297">G-protein coupled receptor</keyword>
<keyword id="KW-0325">Glycoprotein</keyword>
<keyword id="KW-0333">Golgi apparatus</keyword>
<keyword id="KW-0433">Leucine-rich repeat</keyword>
<keyword id="KW-0472">Membrane</keyword>
<keyword id="KW-1267">Proteomics identification</keyword>
<keyword id="KW-0675">Receptor</keyword>
<keyword id="KW-1185">Reference proteome</keyword>
<keyword id="KW-0677">Repeat</keyword>
<keyword id="KW-0732">Signal</keyword>
<keyword id="KW-0807">Transducer</keyword>
<keyword id="KW-0812">Transmembrane</keyword>
<keyword id="KW-1133">Transmembrane helix</keyword>
<evidence type="ECO:0000255" key="1"/>
<evidence type="ECO:0000255" key="2">
    <source>
        <dbReference type="PROSITE-ProRule" id="PRU00521"/>
    </source>
</evidence>
<evidence type="ECO:0000269" key="3">
    <source>
    </source>
</evidence>
<evidence type="ECO:0000269" key="4">
    <source>
    </source>
</evidence>
<evidence type="ECO:0000269" key="5">
    <source>
    </source>
</evidence>
<evidence type="ECO:0000269" key="6">
    <source>
    </source>
</evidence>
<evidence type="ECO:0000269" key="7">
    <source>
    </source>
</evidence>
<evidence type="ECO:0000269" key="8">
    <source>
    </source>
</evidence>
<evidence type="ECO:0000269" key="9">
    <source>
    </source>
</evidence>
<evidence type="ECO:0000269" key="10">
    <source>
    </source>
</evidence>
<evidence type="ECO:0000269" key="11">
    <source>
    </source>
</evidence>
<evidence type="ECO:0000269" key="12">
    <source>
    </source>
</evidence>
<evidence type="ECO:0000269" key="13">
    <source>
    </source>
</evidence>
<evidence type="ECO:0000269" key="14">
    <source>
    </source>
</evidence>
<evidence type="ECO:0000303" key="15">
    <source>
    </source>
</evidence>
<evidence type="ECO:0000303" key="16">
    <source ref="3"/>
</evidence>
<evidence type="ECO:0000305" key="17"/>
<evidence type="ECO:0000305" key="18">
    <source>
    </source>
</evidence>
<evidence type="ECO:0007829" key="19">
    <source>
        <dbReference type="PDB" id="4BSR"/>
    </source>
</evidence>
<evidence type="ECO:0007829" key="20">
    <source>
        <dbReference type="PDB" id="4KNG"/>
    </source>
</evidence>
<evidence type="ECO:0007829" key="21">
    <source>
        <dbReference type="PDB" id="4UFR"/>
    </source>
</evidence>